<sequence>MPEYRSKTSTHGRNMAGARALWRATGMQDGDFQKPIIAIANSFTQFVPGHVHLKDLGQLVAREIERVGGVAKEFDTIAVDDGIAMGHDGMLYSLPSREIIADSVEYMVNAHCADALVCISNCDKITPGMLMAALRLNIPTVFVSGGPMEAGKTALAEHKLDLIDAMVIAADDSASDEKVAEFERSACPTCGSCSGMFTANSMNCLTEALGLSLPGNGTVVATHADREQLFLRAGRVAVELCHRWYGGEDPTALPRGIATFEAFENAMTLDIAMGGSTNTILHLLAAAQEGEVPFGMQDIDRLSKRVPQLCKVAPNTPKYHIEDVHRAGGIMAILGELARGGLLHTTAATVHARTLADAIAHWDVTQTVDENVHTFYKAGPAGIPTQIAFSQATRWDSLDTDRSEGCIRDVAHALSQEGGLAVLYGNIARDGCVVKTAGVDESIHVFEGTARVFESQDAAVKSILADEVKAGDVVVIRYEGPKGGPGMQEMLYPTSYLKSKGLGKQCALLTDGRFSGGTSGLSIGHASPEAAAGGAIGLVRDGDKILIDIPNRGINLLISDEALASRRAEQDAKGWKPVEVRPRKVTTALKAYALLATSADKGAVRDKALLDG</sequence>
<organism>
    <name type="scientific">Xanthomonas oryzae pv. oryzae (strain PXO99A)</name>
    <dbReference type="NCBI Taxonomy" id="360094"/>
    <lineage>
        <taxon>Bacteria</taxon>
        <taxon>Pseudomonadati</taxon>
        <taxon>Pseudomonadota</taxon>
        <taxon>Gammaproteobacteria</taxon>
        <taxon>Lysobacterales</taxon>
        <taxon>Lysobacteraceae</taxon>
        <taxon>Xanthomonas</taxon>
    </lineage>
</organism>
<name>ILVD_XANOP</name>
<gene>
    <name evidence="1" type="primary">ilvD</name>
    <name type="ordered locus">PXO_03941</name>
</gene>
<evidence type="ECO:0000255" key="1">
    <source>
        <dbReference type="HAMAP-Rule" id="MF_00012"/>
    </source>
</evidence>
<feature type="chain" id="PRO_1000089430" description="Dihydroxy-acid dehydratase">
    <location>
        <begin position="1"/>
        <end position="612"/>
    </location>
</feature>
<feature type="active site" description="Proton acceptor" evidence="1">
    <location>
        <position position="515"/>
    </location>
</feature>
<feature type="binding site" evidence="1">
    <location>
        <position position="81"/>
    </location>
    <ligand>
        <name>Mg(2+)</name>
        <dbReference type="ChEBI" id="CHEBI:18420"/>
    </ligand>
</feature>
<feature type="binding site" evidence="1">
    <location>
        <position position="122"/>
    </location>
    <ligand>
        <name>[2Fe-2S] cluster</name>
        <dbReference type="ChEBI" id="CHEBI:190135"/>
    </ligand>
</feature>
<feature type="binding site" evidence="1">
    <location>
        <position position="123"/>
    </location>
    <ligand>
        <name>Mg(2+)</name>
        <dbReference type="ChEBI" id="CHEBI:18420"/>
    </ligand>
</feature>
<feature type="binding site" description="via carbamate group" evidence="1">
    <location>
        <position position="124"/>
    </location>
    <ligand>
        <name>Mg(2+)</name>
        <dbReference type="ChEBI" id="CHEBI:18420"/>
    </ligand>
</feature>
<feature type="binding site" evidence="1">
    <location>
        <position position="193"/>
    </location>
    <ligand>
        <name>[2Fe-2S] cluster</name>
        <dbReference type="ChEBI" id="CHEBI:190135"/>
    </ligand>
</feature>
<feature type="binding site" evidence="1">
    <location>
        <position position="489"/>
    </location>
    <ligand>
        <name>Mg(2+)</name>
        <dbReference type="ChEBI" id="CHEBI:18420"/>
    </ligand>
</feature>
<feature type="modified residue" description="N6-carboxylysine" evidence="1">
    <location>
        <position position="124"/>
    </location>
</feature>
<proteinExistence type="inferred from homology"/>
<comment type="function">
    <text evidence="1">Functions in the biosynthesis of branched-chain amino acids. Catalyzes the dehydration of (2R,3R)-2,3-dihydroxy-3-methylpentanoate (2,3-dihydroxy-3-methylvalerate) into 2-oxo-3-methylpentanoate (2-oxo-3-methylvalerate) and of (2R)-2,3-dihydroxy-3-methylbutanoate (2,3-dihydroxyisovalerate) into 2-oxo-3-methylbutanoate (2-oxoisovalerate), the penultimate precursor to L-isoleucine and L-valine, respectively.</text>
</comment>
<comment type="catalytic activity">
    <reaction evidence="1">
        <text>(2R)-2,3-dihydroxy-3-methylbutanoate = 3-methyl-2-oxobutanoate + H2O</text>
        <dbReference type="Rhea" id="RHEA:24809"/>
        <dbReference type="ChEBI" id="CHEBI:11851"/>
        <dbReference type="ChEBI" id="CHEBI:15377"/>
        <dbReference type="ChEBI" id="CHEBI:49072"/>
        <dbReference type="EC" id="4.2.1.9"/>
    </reaction>
    <physiologicalReaction direction="left-to-right" evidence="1">
        <dbReference type="Rhea" id="RHEA:24810"/>
    </physiologicalReaction>
</comment>
<comment type="catalytic activity">
    <reaction evidence="1">
        <text>(2R,3R)-2,3-dihydroxy-3-methylpentanoate = (S)-3-methyl-2-oxopentanoate + H2O</text>
        <dbReference type="Rhea" id="RHEA:27694"/>
        <dbReference type="ChEBI" id="CHEBI:15377"/>
        <dbReference type="ChEBI" id="CHEBI:35146"/>
        <dbReference type="ChEBI" id="CHEBI:49258"/>
        <dbReference type="EC" id="4.2.1.9"/>
    </reaction>
    <physiologicalReaction direction="left-to-right" evidence="1">
        <dbReference type="Rhea" id="RHEA:27695"/>
    </physiologicalReaction>
</comment>
<comment type="cofactor">
    <cofactor evidence="1">
        <name>[2Fe-2S] cluster</name>
        <dbReference type="ChEBI" id="CHEBI:190135"/>
    </cofactor>
    <text evidence="1">Binds 1 [2Fe-2S] cluster per subunit. This cluster acts as a Lewis acid cofactor.</text>
</comment>
<comment type="cofactor">
    <cofactor evidence="1">
        <name>Mg(2+)</name>
        <dbReference type="ChEBI" id="CHEBI:18420"/>
    </cofactor>
</comment>
<comment type="pathway">
    <text evidence="1">Amino-acid biosynthesis; L-isoleucine biosynthesis; L-isoleucine from 2-oxobutanoate: step 3/4.</text>
</comment>
<comment type="pathway">
    <text evidence="1">Amino-acid biosynthesis; L-valine biosynthesis; L-valine from pyruvate: step 3/4.</text>
</comment>
<comment type="subunit">
    <text evidence="1">Homodimer.</text>
</comment>
<comment type="similarity">
    <text evidence="1">Belongs to the IlvD/Edd family.</text>
</comment>
<protein>
    <recommendedName>
        <fullName evidence="1">Dihydroxy-acid dehydratase</fullName>
        <shortName evidence="1">DAD</shortName>
        <ecNumber evidence="1">4.2.1.9</ecNumber>
    </recommendedName>
</protein>
<keyword id="KW-0001">2Fe-2S</keyword>
<keyword id="KW-0028">Amino-acid biosynthesis</keyword>
<keyword id="KW-0100">Branched-chain amino acid biosynthesis</keyword>
<keyword id="KW-0408">Iron</keyword>
<keyword id="KW-0411">Iron-sulfur</keyword>
<keyword id="KW-0456">Lyase</keyword>
<keyword id="KW-0460">Magnesium</keyword>
<keyword id="KW-0479">Metal-binding</keyword>
<dbReference type="EC" id="4.2.1.9" evidence="1"/>
<dbReference type="EMBL" id="CP000967">
    <property type="protein sequence ID" value="ACD57217.1"/>
    <property type="molecule type" value="Genomic_DNA"/>
</dbReference>
<dbReference type="RefSeq" id="WP_011260556.1">
    <property type="nucleotide sequence ID" value="NC_010717.2"/>
</dbReference>
<dbReference type="SMR" id="B2SK80"/>
<dbReference type="KEGG" id="xop:PXO_03941"/>
<dbReference type="eggNOG" id="COG0129">
    <property type="taxonomic scope" value="Bacteria"/>
</dbReference>
<dbReference type="HOGENOM" id="CLU_014271_4_2_6"/>
<dbReference type="UniPathway" id="UPA00047">
    <property type="reaction ID" value="UER00057"/>
</dbReference>
<dbReference type="UniPathway" id="UPA00049">
    <property type="reaction ID" value="UER00061"/>
</dbReference>
<dbReference type="Proteomes" id="UP000001740">
    <property type="component" value="Chromosome"/>
</dbReference>
<dbReference type="GO" id="GO:0005829">
    <property type="term" value="C:cytosol"/>
    <property type="evidence" value="ECO:0007669"/>
    <property type="project" value="TreeGrafter"/>
</dbReference>
<dbReference type="GO" id="GO:0051537">
    <property type="term" value="F:2 iron, 2 sulfur cluster binding"/>
    <property type="evidence" value="ECO:0007669"/>
    <property type="project" value="UniProtKB-UniRule"/>
</dbReference>
<dbReference type="GO" id="GO:0004160">
    <property type="term" value="F:dihydroxy-acid dehydratase activity"/>
    <property type="evidence" value="ECO:0007669"/>
    <property type="project" value="UniProtKB-UniRule"/>
</dbReference>
<dbReference type="GO" id="GO:0000287">
    <property type="term" value="F:magnesium ion binding"/>
    <property type="evidence" value="ECO:0007669"/>
    <property type="project" value="UniProtKB-UniRule"/>
</dbReference>
<dbReference type="GO" id="GO:0009097">
    <property type="term" value="P:isoleucine biosynthetic process"/>
    <property type="evidence" value="ECO:0007669"/>
    <property type="project" value="UniProtKB-UniRule"/>
</dbReference>
<dbReference type="GO" id="GO:0009099">
    <property type="term" value="P:L-valine biosynthetic process"/>
    <property type="evidence" value="ECO:0007669"/>
    <property type="project" value="UniProtKB-UniRule"/>
</dbReference>
<dbReference type="FunFam" id="3.50.30.80:FF:000001">
    <property type="entry name" value="Dihydroxy-acid dehydratase"/>
    <property type="match status" value="1"/>
</dbReference>
<dbReference type="Gene3D" id="3.50.30.80">
    <property type="entry name" value="IlvD/EDD C-terminal domain-like"/>
    <property type="match status" value="1"/>
</dbReference>
<dbReference type="HAMAP" id="MF_00012">
    <property type="entry name" value="IlvD"/>
    <property type="match status" value="1"/>
</dbReference>
<dbReference type="InterPro" id="IPR042096">
    <property type="entry name" value="Dihydro-acid_dehy_C"/>
</dbReference>
<dbReference type="InterPro" id="IPR004404">
    <property type="entry name" value="DihydroxyA_deHydtase"/>
</dbReference>
<dbReference type="InterPro" id="IPR020558">
    <property type="entry name" value="DiOHA_6PGluconate_deHydtase_CS"/>
</dbReference>
<dbReference type="InterPro" id="IPR056740">
    <property type="entry name" value="ILV_EDD_C"/>
</dbReference>
<dbReference type="InterPro" id="IPR000581">
    <property type="entry name" value="ILV_EDD_N"/>
</dbReference>
<dbReference type="InterPro" id="IPR037237">
    <property type="entry name" value="IlvD/EDD_N"/>
</dbReference>
<dbReference type="NCBIfam" id="TIGR00110">
    <property type="entry name" value="ilvD"/>
    <property type="match status" value="1"/>
</dbReference>
<dbReference type="NCBIfam" id="NF009103">
    <property type="entry name" value="PRK12448.1"/>
    <property type="match status" value="1"/>
</dbReference>
<dbReference type="PANTHER" id="PTHR43661">
    <property type="entry name" value="D-XYLONATE DEHYDRATASE"/>
    <property type="match status" value="1"/>
</dbReference>
<dbReference type="PANTHER" id="PTHR43661:SF3">
    <property type="entry name" value="D-XYLONATE DEHYDRATASE YAGF-RELATED"/>
    <property type="match status" value="1"/>
</dbReference>
<dbReference type="Pfam" id="PF24877">
    <property type="entry name" value="ILV_EDD_C"/>
    <property type="match status" value="1"/>
</dbReference>
<dbReference type="Pfam" id="PF00920">
    <property type="entry name" value="ILVD_EDD_N"/>
    <property type="match status" value="1"/>
</dbReference>
<dbReference type="SUPFAM" id="SSF143975">
    <property type="entry name" value="IlvD/EDD N-terminal domain-like"/>
    <property type="match status" value="1"/>
</dbReference>
<dbReference type="SUPFAM" id="SSF52016">
    <property type="entry name" value="LeuD/IlvD-like"/>
    <property type="match status" value="1"/>
</dbReference>
<dbReference type="PROSITE" id="PS00886">
    <property type="entry name" value="ILVD_EDD_1"/>
    <property type="match status" value="1"/>
</dbReference>
<dbReference type="PROSITE" id="PS00887">
    <property type="entry name" value="ILVD_EDD_2"/>
    <property type="match status" value="1"/>
</dbReference>
<accession>B2SK80</accession>
<reference key="1">
    <citation type="journal article" date="2008" name="BMC Genomics">
        <title>Genome sequence and rapid evolution of the rice pathogen Xanthomonas oryzae pv. oryzae PXO99A.</title>
        <authorList>
            <person name="Salzberg S.L."/>
            <person name="Sommer D.D."/>
            <person name="Schatz M.C."/>
            <person name="Phillippy A.M."/>
            <person name="Rabinowicz P.D."/>
            <person name="Tsuge S."/>
            <person name="Furutani A."/>
            <person name="Ochiai H."/>
            <person name="Delcher A.L."/>
            <person name="Kelley D."/>
            <person name="Madupu R."/>
            <person name="Puiu D."/>
            <person name="Radune D."/>
            <person name="Shumway M."/>
            <person name="Trapnell C."/>
            <person name="Aparna G."/>
            <person name="Jha G."/>
            <person name="Pandey A."/>
            <person name="Patil P.B."/>
            <person name="Ishihara H."/>
            <person name="Meyer D.F."/>
            <person name="Szurek B."/>
            <person name="Verdier V."/>
            <person name="Koebnik R."/>
            <person name="Dow J.M."/>
            <person name="Ryan R.P."/>
            <person name="Hirata H."/>
            <person name="Tsuyumu S."/>
            <person name="Won Lee S."/>
            <person name="Seo Y.-S."/>
            <person name="Sriariyanum M."/>
            <person name="Ronald P.C."/>
            <person name="Sonti R.V."/>
            <person name="Van Sluys M.-A."/>
            <person name="Leach J.E."/>
            <person name="White F.F."/>
            <person name="Bogdanove A.J."/>
        </authorList>
    </citation>
    <scope>NUCLEOTIDE SEQUENCE [LARGE SCALE GENOMIC DNA]</scope>
    <source>
        <strain>PXO99A</strain>
    </source>
</reference>